<sequence length="253" mass="28547">MSIEIHASAKNLNLWYDSNQVLHNISLDIYKREVTAFIGPSGCGKSTFLRCFNRMNDFVSNCKIKGELIIENIDVCSVNTNVVLLRAKVGMVFQKPNPFPKSIYDNVAYGPKLHGLAKNKKKLDEIVEKSLTSVGLWEELSDRLKDNAFELSGGQQQRLCIARAIAVKPTMLLMDEPCSALDPFATSVIENLIQNLKKNFTIIVVTHSMKQARKVSDKVAFFESGKLIEYNTTDEIFKNPQSSKTKRYIVDHL</sequence>
<comment type="function">
    <text evidence="1">Part of the ABC transporter complex PstSACB involved in phosphate import. Responsible for energy coupling to the transport system.</text>
</comment>
<comment type="catalytic activity">
    <reaction evidence="1">
        <text>phosphate(out) + ATP + H2O = ADP + 2 phosphate(in) + H(+)</text>
        <dbReference type="Rhea" id="RHEA:24440"/>
        <dbReference type="ChEBI" id="CHEBI:15377"/>
        <dbReference type="ChEBI" id="CHEBI:15378"/>
        <dbReference type="ChEBI" id="CHEBI:30616"/>
        <dbReference type="ChEBI" id="CHEBI:43474"/>
        <dbReference type="ChEBI" id="CHEBI:456216"/>
        <dbReference type="EC" id="7.3.2.1"/>
    </reaction>
</comment>
<comment type="subunit">
    <text evidence="1">The complex is composed of two ATP-binding proteins (PstB), two transmembrane proteins (PstC and PstA) and a solute-binding protein (PstS).</text>
</comment>
<comment type="subcellular location">
    <subcellularLocation>
        <location evidence="1">Cell inner membrane</location>
        <topology evidence="1">Peripheral membrane protein</topology>
    </subcellularLocation>
</comment>
<comment type="similarity">
    <text evidence="1">Belongs to the ABC transporter superfamily. Phosphate importer (TC 3.A.1.7) family.</text>
</comment>
<organism>
    <name type="scientific">Ehrlichia ruminantium (strain Welgevonden)</name>
    <dbReference type="NCBI Taxonomy" id="254945"/>
    <lineage>
        <taxon>Bacteria</taxon>
        <taxon>Pseudomonadati</taxon>
        <taxon>Pseudomonadota</taxon>
        <taxon>Alphaproteobacteria</taxon>
        <taxon>Rickettsiales</taxon>
        <taxon>Anaplasmataceae</taxon>
        <taxon>Ehrlichia</taxon>
    </lineage>
</organism>
<keyword id="KW-0067">ATP-binding</keyword>
<keyword id="KW-0997">Cell inner membrane</keyword>
<keyword id="KW-1003">Cell membrane</keyword>
<keyword id="KW-0472">Membrane</keyword>
<keyword id="KW-0547">Nucleotide-binding</keyword>
<keyword id="KW-0592">Phosphate transport</keyword>
<keyword id="KW-1278">Translocase</keyword>
<keyword id="KW-0813">Transport</keyword>
<proteinExistence type="inferred from homology"/>
<gene>
    <name evidence="1" type="primary">pstB</name>
    <name type="ordered locus">Erum5760</name>
    <name type="ordered locus">ERWE_CDS_06050</name>
</gene>
<reference key="1">
    <citation type="journal article" date="2005" name="Proc. Natl. Acad. Sci. U.S.A.">
        <title>The genome of the heartwater agent Ehrlichia ruminantium contains multiple tandem repeats of actively variable copy number.</title>
        <authorList>
            <person name="Collins N.E."/>
            <person name="Liebenberg J."/>
            <person name="de Villiers E.P."/>
            <person name="Brayton K.A."/>
            <person name="Louw E."/>
            <person name="Pretorius A."/>
            <person name="Faber F.E."/>
            <person name="van Heerden H."/>
            <person name="Josemans A."/>
            <person name="van Kleef M."/>
            <person name="Steyn H.C."/>
            <person name="van Strijp M.F."/>
            <person name="Zweygarth E."/>
            <person name="Jongejan F."/>
            <person name="Maillard J.C."/>
            <person name="Berthier D."/>
            <person name="Botha M."/>
            <person name="Joubert F."/>
            <person name="Corton C.H."/>
            <person name="Thomson N.R."/>
            <person name="Allsopp M.T."/>
            <person name="Allsopp B.A."/>
        </authorList>
    </citation>
    <scope>NUCLEOTIDE SEQUENCE [LARGE SCALE GENOMIC DNA]</scope>
    <source>
        <strain>Welgevonden</strain>
    </source>
</reference>
<reference key="2">
    <citation type="journal article" date="2006" name="J. Bacteriol.">
        <title>Comparative genomic analysis of three strains of Ehrlichia ruminantium reveals an active process of genome size plasticity.</title>
        <authorList>
            <person name="Frutos R."/>
            <person name="Viari A."/>
            <person name="Ferraz C."/>
            <person name="Morgat A."/>
            <person name="Eychenie S."/>
            <person name="Kandassamy Y."/>
            <person name="Chantal I."/>
            <person name="Bensaid A."/>
            <person name="Coissac E."/>
            <person name="Vachiery N."/>
            <person name="Demaille J."/>
            <person name="Martinez D."/>
        </authorList>
    </citation>
    <scope>NUCLEOTIDE SEQUENCE [LARGE SCALE GENOMIC DNA]</scope>
    <source>
        <strain>Welgevonden</strain>
    </source>
</reference>
<feature type="chain" id="PRO_0000272451" description="Phosphate import ATP-binding protein PstB">
    <location>
        <begin position="1"/>
        <end position="253"/>
    </location>
</feature>
<feature type="domain" description="ABC transporter" evidence="1">
    <location>
        <begin position="7"/>
        <end position="249"/>
    </location>
</feature>
<feature type="binding site" evidence="1">
    <location>
        <begin position="39"/>
        <end position="46"/>
    </location>
    <ligand>
        <name>ATP</name>
        <dbReference type="ChEBI" id="CHEBI:30616"/>
    </ligand>
</feature>
<name>PSTB_EHRRW</name>
<accession>Q5HAV5</accession>
<accession>Q5FD48</accession>
<evidence type="ECO:0000255" key="1">
    <source>
        <dbReference type="HAMAP-Rule" id="MF_01702"/>
    </source>
</evidence>
<protein>
    <recommendedName>
        <fullName evidence="1">Phosphate import ATP-binding protein PstB</fullName>
        <ecNumber evidence="1">7.3.2.1</ecNumber>
    </recommendedName>
    <alternativeName>
        <fullName evidence="1">ABC phosphate transporter</fullName>
    </alternativeName>
    <alternativeName>
        <fullName evidence="1">Phosphate-transporting ATPase</fullName>
    </alternativeName>
</protein>
<dbReference type="EC" id="7.3.2.1" evidence="1"/>
<dbReference type="EMBL" id="CR767821">
    <property type="protein sequence ID" value="CAH58306.1"/>
    <property type="molecule type" value="Genomic_DNA"/>
</dbReference>
<dbReference type="EMBL" id="CR925678">
    <property type="protein sequence ID" value="CAI27099.1"/>
    <property type="molecule type" value="Genomic_DNA"/>
</dbReference>
<dbReference type="RefSeq" id="WP_011155256.1">
    <property type="nucleotide sequence ID" value="NC_005295.2"/>
</dbReference>
<dbReference type="SMR" id="Q5HAV5"/>
<dbReference type="GeneID" id="33057618"/>
<dbReference type="KEGG" id="eru:Erum5760"/>
<dbReference type="KEGG" id="erw:ERWE_CDS_06050"/>
<dbReference type="eggNOG" id="COG1117">
    <property type="taxonomic scope" value="Bacteria"/>
</dbReference>
<dbReference type="HOGENOM" id="CLU_000604_1_22_5"/>
<dbReference type="Proteomes" id="UP000001021">
    <property type="component" value="Chromosome"/>
</dbReference>
<dbReference type="GO" id="GO:0005886">
    <property type="term" value="C:plasma membrane"/>
    <property type="evidence" value="ECO:0007669"/>
    <property type="project" value="UniProtKB-SubCell"/>
</dbReference>
<dbReference type="GO" id="GO:0005524">
    <property type="term" value="F:ATP binding"/>
    <property type="evidence" value="ECO:0007669"/>
    <property type="project" value="UniProtKB-KW"/>
</dbReference>
<dbReference type="GO" id="GO:0016887">
    <property type="term" value="F:ATP hydrolysis activity"/>
    <property type="evidence" value="ECO:0007669"/>
    <property type="project" value="InterPro"/>
</dbReference>
<dbReference type="GO" id="GO:0015415">
    <property type="term" value="F:ATPase-coupled phosphate ion transmembrane transporter activity"/>
    <property type="evidence" value="ECO:0007669"/>
    <property type="project" value="UniProtKB-EC"/>
</dbReference>
<dbReference type="GO" id="GO:0035435">
    <property type="term" value="P:phosphate ion transmembrane transport"/>
    <property type="evidence" value="ECO:0007669"/>
    <property type="project" value="InterPro"/>
</dbReference>
<dbReference type="CDD" id="cd03260">
    <property type="entry name" value="ABC_PstB_phosphate_transporter"/>
    <property type="match status" value="1"/>
</dbReference>
<dbReference type="Gene3D" id="3.40.50.300">
    <property type="entry name" value="P-loop containing nucleotide triphosphate hydrolases"/>
    <property type="match status" value="1"/>
</dbReference>
<dbReference type="InterPro" id="IPR003593">
    <property type="entry name" value="AAA+_ATPase"/>
</dbReference>
<dbReference type="InterPro" id="IPR003439">
    <property type="entry name" value="ABC_transporter-like_ATP-bd"/>
</dbReference>
<dbReference type="InterPro" id="IPR017871">
    <property type="entry name" value="ABC_transporter-like_CS"/>
</dbReference>
<dbReference type="InterPro" id="IPR027417">
    <property type="entry name" value="P-loop_NTPase"/>
</dbReference>
<dbReference type="InterPro" id="IPR005670">
    <property type="entry name" value="PstB-like"/>
</dbReference>
<dbReference type="NCBIfam" id="TIGR00972">
    <property type="entry name" value="3a0107s01c2"/>
    <property type="match status" value="1"/>
</dbReference>
<dbReference type="PANTHER" id="PTHR43423">
    <property type="entry name" value="ABC TRANSPORTER I FAMILY MEMBER 17"/>
    <property type="match status" value="1"/>
</dbReference>
<dbReference type="PANTHER" id="PTHR43423:SF1">
    <property type="entry name" value="ABC TRANSPORTER I FAMILY MEMBER 17"/>
    <property type="match status" value="1"/>
</dbReference>
<dbReference type="Pfam" id="PF00005">
    <property type="entry name" value="ABC_tran"/>
    <property type="match status" value="1"/>
</dbReference>
<dbReference type="SMART" id="SM00382">
    <property type="entry name" value="AAA"/>
    <property type="match status" value="1"/>
</dbReference>
<dbReference type="SUPFAM" id="SSF52540">
    <property type="entry name" value="P-loop containing nucleoside triphosphate hydrolases"/>
    <property type="match status" value="1"/>
</dbReference>
<dbReference type="PROSITE" id="PS00211">
    <property type="entry name" value="ABC_TRANSPORTER_1"/>
    <property type="match status" value="1"/>
</dbReference>
<dbReference type="PROSITE" id="PS50893">
    <property type="entry name" value="ABC_TRANSPORTER_2"/>
    <property type="match status" value="1"/>
</dbReference>
<dbReference type="PROSITE" id="PS51238">
    <property type="entry name" value="PSTB"/>
    <property type="match status" value="1"/>
</dbReference>